<protein>
    <recommendedName>
        <fullName>Uncharacterized protein MT2713</fullName>
    </recommendedName>
</protein>
<evidence type="ECO:0000255" key="1"/>
<evidence type="ECO:0000256" key="2">
    <source>
        <dbReference type="SAM" id="MobiDB-lite"/>
    </source>
</evidence>
<name>Y2635_MYCTO</name>
<accession>P9WL56</accession>
<accession>L0TCY3</accession>
<accession>P65037</accession>
<accession>P71934</accession>
<gene>
    <name type="ordered locus">MT2713</name>
</gene>
<keyword id="KW-1185">Reference proteome</keyword>
<keyword id="KW-0732">Signal</keyword>
<reference key="1">
    <citation type="journal article" date="2002" name="J. Bacteriol.">
        <title>Whole-genome comparison of Mycobacterium tuberculosis clinical and laboratory strains.</title>
        <authorList>
            <person name="Fleischmann R.D."/>
            <person name="Alland D."/>
            <person name="Eisen J.A."/>
            <person name="Carpenter L."/>
            <person name="White O."/>
            <person name="Peterson J.D."/>
            <person name="DeBoy R.T."/>
            <person name="Dodson R.J."/>
            <person name="Gwinn M.L."/>
            <person name="Haft D.H."/>
            <person name="Hickey E.K."/>
            <person name="Kolonay J.F."/>
            <person name="Nelson W.C."/>
            <person name="Umayam L.A."/>
            <person name="Ermolaeva M.D."/>
            <person name="Salzberg S.L."/>
            <person name="Delcher A."/>
            <person name="Utterback T.R."/>
            <person name="Weidman J.F."/>
            <person name="Khouri H.M."/>
            <person name="Gill J."/>
            <person name="Mikula A."/>
            <person name="Bishai W."/>
            <person name="Jacobs W.R. Jr."/>
            <person name="Venter J.C."/>
            <person name="Fraser C.M."/>
        </authorList>
    </citation>
    <scope>NUCLEOTIDE SEQUENCE [LARGE SCALE GENOMIC DNA]</scope>
    <source>
        <strain>CDC 1551 / Oshkosh</strain>
    </source>
</reference>
<feature type="signal peptide" evidence="1">
    <location>
        <begin position="1"/>
        <end position="20"/>
    </location>
</feature>
<feature type="chain" id="PRO_0000427537" description="Uncharacterized protein MT2713">
    <location>
        <begin position="21"/>
        <end position="80"/>
    </location>
</feature>
<feature type="region of interest" description="Disordered" evidence="2">
    <location>
        <begin position="1"/>
        <end position="21"/>
    </location>
</feature>
<feature type="compositionally biased region" description="Polar residues" evidence="2">
    <location>
        <begin position="11"/>
        <end position="21"/>
    </location>
</feature>
<dbReference type="EMBL" id="AE000516">
    <property type="protein sequence ID" value="AAK47027.1"/>
    <property type="molecule type" value="Genomic_DNA"/>
</dbReference>
<dbReference type="PIR" id="G70963">
    <property type="entry name" value="G70963"/>
</dbReference>
<dbReference type="RefSeq" id="WP_003899405.1">
    <property type="nucleotide sequence ID" value="NZ_KK341227.1"/>
</dbReference>
<dbReference type="KEGG" id="mtc:MT2713"/>
<dbReference type="HOGENOM" id="CLU_2585988_0_0_11"/>
<dbReference type="Proteomes" id="UP000001020">
    <property type="component" value="Chromosome"/>
</dbReference>
<sequence>MVAADHRALGSNKSYPASQTAEAIWPPARTLRYDRQSPWLATGFDRRMSQTVTGVGVQNCAVSKRRCSAVDHSSRTPYRR</sequence>
<organism>
    <name type="scientific">Mycobacterium tuberculosis (strain CDC 1551 / Oshkosh)</name>
    <dbReference type="NCBI Taxonomy" id="83331"/>
    <lineage>
        <taxon>Bacteria</taxon>
        <taxon>Bacillati</taxon>
        <taxon>Actinomycetota</taxon>
        <taxon>Actinomycetes</taxon>
        <taxon>Mycobacteriales</taxon>
        <taxon>Mycobacteriaceae</taxon>
        <taxon>Mycobacterium</taxon>
        <taxon>Mycobacterium tuberculosis complex</taxon>
    </lineage>
</organism>
<proteinExistence type="inferred from homology"/>